<evidence type="ECO:0000255" key="1"/>
<evidence type="ECO:0000269" key="2">
    <source>
    </source>
</evidence>
<evidence type="ECO:0000269" key="3">
    <source>
    </source>
</evidence>
<evidence type="ECO:0000269" key="4">
    <source>
    </source>
</evidence>
<evidence type="ECO:0000269" key="5">
    <source>
    </source>
</evidence>
<evidence type="ECO:0000269" key="6">
    <source>
    </source>
</evidence>
<evidence type="ECO:0000269" key="7">
    <source>
    </source>
</evidence>
<evidence type="ECO:0000305" key="8"/>
<comment type="function">
    <text evidence="2 3 5">Component of the TIM22 complex, a complex that mediates the import and insertion of multi-pass transmembrane proteins into the mitochondrial inner membrane. The TIM22 complex forms a twin-pore translocase that uses the membrane potential as external driving force. Its role in the complex is unclear but it may be involved in the assembly and stabilization of the TIM22 complex.</text>
</comment>
<comment type="subunit">
    <text evidence="2 3 4">Component of the TIM22 complex, whose core is composed of TIM18, TIM22 and TIM54, associated with the peripheral proteins MRS5/TIM12 and the 70 kDa heterohexamer composed of TIM9 and TIM10 (or TIM8 and TIM13).</text>
</comment>
<comment type="interaction">
    <interactant intactId="EBI-30499">
        <id>Q08749</id>
    </interactant>
    <interactant intactId="EBI-9115">
        <id>P87108</id>
        <label>TIM10</label>
    </interactant>
    <organismsDiffer>false</organismsDiffer>
    <experiments>2</experiments>
</comment>
<comment type="subcellular location">
    <subcellularLocation>
        <location evidence="2 3 6">Mitochondrion inner membrane</location>
        <topology evidence="2 3 6">Multi-pass membrane protein</topology>
    </subcellularLocation>
</comment>
<comment type="disruption phenotype">
    <text evidence="5">Although cells lacking TIM18 live well and do not display any strong phenotype, they do not survive in the absence of mitochondrial DNA.</text>
</comment>
<comment type="miscellaneous">
    <text evidence="7">Present with 4440 molecules/cell in log phase SD medium.</text>
</comment>
<comment type="similarity">
    <text evidence="8">Belongs to the CybS family.</text>
</comment>
<feature type="transit peptide" description="Mitochondrion" evidence="1">
    <location>
        <begin position="1"/>
        <end position="42"/>
    </location>
</feature>
<feature type="chain" id="PRO_0000228080" description="Mitochondrial import inner membrane translocase subunit TIM18">
    <location>
        <begin position="43"/>
        <end position="192"/>
    </location>
</feature>
<feature type="topological domain" description="Mitochondrial matrix" evidence="1">
    <location>
        <begin position="43"/>
        <end position="88"/>
    </location>
</feature>
<feature type="transmembrane region" description="Helical" evidence="1">
    <location>
        <begin position="89"/>
        <end position="109"/>
    </location>
</feature>
<feature type="topological domain" description="Mitochondrial intermembrane" evidence="1">
    <location>
        <begin position="110"/>
        <end position="113"/>
    </location>
</feature>
<feature type="transmembrane region" description="Helical" evidence="1">
    <location>
        <begin position="114"/>
        <end position="134"/>
    </location>
</feature>
<feature type="topological domain" description="Mitochondrial matrix" evidence="1">
    <location>
        <begin position="135"/>
        <end position="144"/>
    </location>
</feature>
<feature type="transmembrane region" description="Helical" evidence="1">
    <location>
        <begin position="145"/>
        <end position="165"/>
    </location>
</feature>
<feature type="topological domain" description="Mitochondrial intermembrane" evidence="1">
    <location>
        <begin position="166"/>
        <end position="192"/>
    </location>
</feature>
<feature type="sequence conflict" description="In Ref. 1; AAF13717, 2 and 3; CAA99525." evidence="8" ref="1 2 3">
    <original>E</original>
    <variation>G</variation>
    <location>
        <position position="137"/>
    </location>
</feature>
<name>TIM18_YEAST</name>
<gene>
    <name type="primary">TIM18</name>
    <name type="ordered locus">YOR297C</name>
</gene>
<dbReference type="EMBL" id="AF200324">
    <property type="protein sequence ID" value="AAF13717.1"/>
    <property type="molecule type" value="Genomic_DNA"/>
</dbReference>
<dbReference type="EMBL" id="Z75205">
    <property type="protein sequence ID" value="CAA99525.1"/>
    <property type="molecule type" value="Genomic_DNA"/>
</dbReference>
<dbReference type="EMBL" id="BK006948">
    <property type="protein sequence ID" value="DAA11062.2"/>
    <property type="molecule type" value="Genomic_DNA"/>
</dbReference>
<dbReference type="PIR" id="S67201">
    <property type="entry name" value="S67201"/>
</dbReference>
<dbReference type="RefSeq" id="NP_014940.4">
    <property type="nucleotide sequence ID" value="NM_001183716.4"/>
</dbReference>
<dbReference type="PDB" id="6LO8">
    <property type="method" value="EM"/>
    <property type="resolution" value="3.83 A"/>
    <property type="chains" value="D=1-192"/>
</dbReference>
<dbReference type="PDBsum" id="6LO8"/>
<dbReference type="EMDB" id="EMD-0935"/>
<dbReference type="SMR" id="Q08749"/>
<dbReference type="BioGRID" id="34685">
    <property type="interactions" value="332"/>
</dbReference>
<dbReference type="ComplexPortal" id="CPX-1629">
    <property type="entry name" value="TIM22 mitochondrial inner membrane twin-pore carrier translocase complex"/>
</dbReference>
<dbReference type="DIP" id="DIP-5205N"/>
<dbReference type="FunCoup" id="Q08749">
    <property type="interactions" value="110"/>
</dbReference>
<dbReference type="IntAct" id="Q08749">
    <property type="interactions" value="22"/>
</dbReference>
<dbReference type="MINT" id="Q08749"/>
<dbReference type="STRING" id="4932.YOR297C"/>
<dbReference type="TCDB" id="3.A.8.1.1">
    <property type="family name" value="the mitochondrial protein translocase (mpt) family"/>
</dbReference>
<dbReference type="iPTMnet" id="Q08749"/>
<dbReference type="PaxDb" id="4932-YOR297C"/>
<dbReference type="PeptideAtlas" id="Q08749"/>
<dbReference type="EnsemblFungi" id="YOR297C_mRNA">
    <property type="protein sequence ID" value="YOR297C"/>
    <property type="gene ID" value="YOR297C"/>
</dbReference>
<dbReference type="GeneID" id="854472"/>
<dbReference type="KEGG" id="sce:YOR297C"/>
<dbReference type="AGR" id="SGD:S000005823"/>
<dbReference type="SGD" id="S000005823">
    <property type="gene designation" value="TIM18"/>
</dbReference>
<dbReference type="VEuPathDB" id="FungiDB:YOR297C"/>
<dbReference type="eggNOG" id="KOG4097">
    <property type="taxonomic scope" value="Eukaryota"/>
</dbReference>
<dbReference type="GeneTree" id="ENSGT00390000010003"/>
<dbReference type="HOGENOM" id="CLU_096618_0_1_1"/>
<dbReference type="InParanoid" id="Q08749"/>
<dbReference type="OMA" id="DYIPKRK"/>
<dbReference type="OrthoDB" id="18577at2759"/>
<dbReference type="BioCyc" id="YEAST:G3O-33782-MONOMER"/>
<dbReference type="Reactome" id="R-SCE-71403">
    <property type="pathway name" value="Citric acid cycle (TCA cycle)"/>
</dbReference>
<dbReference type="BioGRID-ORCS" id="854472">
    <property type="hits" value="0 hits in 10 CRISPR screens"/>
</dbReference>
<dbReference type="PRO" id="PR:Q08749"/>
<dbReference type="Proteomes" id="UP000002311">
    <property type="component" value="Chromosome XV"/>
</dbReference>
<dbReference type="RNAct" id="Q08749">
    <property type="molecule type" value="protein"/>
</dbReference>
<dbReference type="GO" id="GO:0005743">
    <property type="term" value="C:mitochondrial inner membrane"/>
    <property type="evidence" value="ECO:0000314"/>
    <property type="project" value="ComplexPortal"/>
</dbReference>
<dbReference type="GO" id="GO:0005739">
    <property type="term" value="C:mitochondrion"/>
    <property type="evidence" value="ECO:0007005"/>
    <property type="project" value="SGD"/>
</dbReference>
<dbReference type="GO" id="GO:0042721">
    <property type="term" value="C:TIM22 mitochondrial import inner membrane insertion complex"/>
    <property type="evidence" value="ECO:0000314"/>
    <property type="project" value="SGD"/>
</dbReference>
<dbReference type="GO" id="GO:0006915">
    <property type="term" value="P:apoptotic process"/>
    <property type="evidence" value="ECO:0000315"/>
    <property type="project" value="SGD"/>
</dbReference>
<dbReference type="GO" id="GO:0034599">
    <property type="term" value="P:cellular response to oxidative stress"/>
    <property type="evidence" value="ECO:0000315"/>
    <property type="project" value="SGD"/>
</dbReference>
<dbReference type="GO" id="GO:0045039">
    <property type="term" value="P:protein insertion into mitochondrial inner membrane"/>
    <property type="evidence" value="ECO:0000314"/>
    <property type="project" value="ComplexPortal"/>
</dbReference>
<dbReference type="GO" id="GO:0071806">
    <property type="term" value="P:protein transmembrane transport"/>
    <property type="evidence" value="ECO:0007669"/>
    <property type="project" value="GOC"/>
</dbReference>
<dbReference type="GO" id="GO:0046685">
    <property type="term" value="P:response to arsenic-containing substance"/>
    <property type="evidence" value="ECO:0000315"/>
    <property type="project" value="SGD"/>
</dbReference>
<dbReference type="GO" id="GO:0006970">
    <property type="term" value="P:response to osmotic stress"/>
    <property type="evidence" value="ECO:0000315"/>
    <property type="project" value="SGD"/>
</dbReference>
<dbReference type="CDD" id="cd03496">
    <property type="entry name" value="SQR_TypeC_CybS"/>
    <property type="match status" value="1"/>
</dbReference>
<dbReference type="FunFam" id="1.20.1300.10:FF:000007">
    <property type="entry name" value="Succinate dehydrogenase [ubiquinone] cytochrome b small subunit"/>
    <property type="match status" value="1"/>
</dbReference>
<dbReference type="Gene3D" id="1.20.1300.10">
    <property type="entry name" value="Fumarate reductase/succinate dehydrogenase, transmembrane subunit"/>
    <property type="match status" value="1"/>
</dbReference>
<dbReference type="InterPro" id="IPR007992">
    <property type="entry name" value="CybS"/>
</dbReference>
<dbReference type="InterPro" id="IPR034804">
    <property type="entry name" value="SQR/QFR_C/D"/>
</dbReference>
<dbReference type="PANTHER" id="PTHR13337">
    <property type="entry name" value="SUCCINATE DEHYDROGENASE"/>
    <property type="match status" value="1"/>
</dbReference>
<dbReference type="PANTHER" id="PTHR13337:SF2">
    <property type="entry name" value="SUCCINATE DEHYDROGENASE [UBIQUINONE] CYTOCHROME B SMALL SUBUNIT, MITOCHONDRIAL"/>
    <property type="match status" value="1"/>
</dbReference>
<dbReference type="Pfam" id="PF05328">
    <property type="entry name" value="CybS"/>
    <property type="match status" value="1"/>
</dbReference>
<accession>Q08749</accession>
<accession>D6W2Z6</accession>
<keyword id="KW-0002">3D-structure</keyword>
<keyword id="KW-0472">Membrane</keyword>
<keyword id="KW-0496">Mitochondrion</keyword>
<keyword id="KW-0999">Mitochondrion inner membrane</keyword>
<keyword id="KW-0653">Protein transport</keyword>
<keyword id="KW-1185">Reference proteome</keyword>
<keyword id="KW-0809">Transit peptide</keyword>
<keyword id="KW-0811">Translocation</keyword>
<keyword id="KW-0812">Transmembrane</keyword>
<keyword id="KW-1133">Transmembrane helix</keyword>
<keyword id="KW-0813">Transport</keyword>
<reference key="1">
    <citation type="journal article" date="2000" name="Mol. Cell. Biol.">
        <title>Tim18p, a new subunit of the TIM22 complex that mediates insertion of imported proteins into the yeast mitochondrial inner membrane.</title>
        <authorList>
            <person name="Koehler C.M."/>
            <person name="Murphy M.P."/>
            <person name="Bally N.A."/>
            <person name="Leuenberger D."/>
            <person name="Oppliger W."/>
            <person name="Dolfini L."/>
            <person name="Junne T."/>
            <person name="Schatz G."/>
            <person name="Or E."/>
        </authorList>
    </citation>
    <scope>NUCLEOTIDE SEQUENCE [GENOMIC DNA]</scope>
    <scope>FUNCTION</scope>
    <scope>SUBCELLULAR LOCATION</scope>
    <scope>TOPOLOGY</scope>
    <scope>IDENTIFICATION BY MASS SPECTROMETRY</scope>
    <scope>IDENTIFICATION IN THE TIM22 COMPLEX WITH TIM12; TIM22 AND TIM54</scope>
    <source>
        <strain>ATCC 24657 / D273-10B</strain>
    </source>
</reference>
<reference key="2">
    <citation type="journal article" date="1997" name="Yeast">
        <title>Sequence and analysis of a 36.2 kb fragment from the right arm of yeast chromosome XV reveals 19 open reading frames including SNF2 (5' end), CPA1, SLY41, a putative transport ATPase, a putative ribosomal protein and an SNF2 homologue.</title>
        <authorList>
            <person name="Poirey R."/>
            <person name="Cziepluch C."/>
            <person name="Tobiasch E."/>
            <person name="Pujol A."/>
            <person name="Kordes E."/>
            <person name="Jauniaux J.-C."/>
        </authorList>
    </citation>
    <scope>NUCLEOTIDE SEQUENCE [GENOMIC DNA]</scope>
    <source>
        <strain>ATCC 96604 / S288c / FY1679</strain>
    </source>
</reference>
<reference key="3">
    <citation type="journal article" date="1997" name="Nature">
        <title>The nucleotide sequence of Saccharomyces cerevisiae chromosome XV.</title>
        <authorList>
            <person name="Dujon B."/>
            <person name="Albermann K."/>
            <person name="Aldea M."/>
            <person name="Alexandraki D."/>
            <person name="Ansorge W."/>
            <person name="Arino J."/>
            <person name="Benes V."/>
            <person name="Bohn C."/>
            <person name="Bolotin-Fukuhara M."/>
            <person name="Bordonne R."/>
            <person name="Boyer J."/>
            <person name="Camasses A."/>
            <person name="Casamayor A."/>
            <person name="Casas C."/>
            <person name="Cheret G."/>
            <person name="Cziepluch C."/>
            <person name="Daignan-Fornier B."/>
            <person name="Dang V.-D."/>
            <person name="de Haan M."/>
            <person name="Delius H."/>
            <person name="Durand P."/>
            <person name="Fairhead C."/>
            <person name="Feldmann H."/>
            <person name="Gaillon L."/>
            <person name="Galisson F."/>
            <person name="Gamo F.-J."/>
            <person name="Gancedo C."/>
            <person name="Goffeau A."/>
            <person name="Goulding S.E."/>
            <person name="Grivell L.A."/>
            <person name="Habbig B."/>
            <person name="Hand N.J."/>
            <person name="Hani J."/>
            <person name="Hattenhorst U."/>
            <person name="Hebling U."/>
            <person name="Hernando Y."/>
            <person name="Herrero E."/>
            <person name="Heumann K."/>
            <person name="Hiesel R."/>
            <person name="Hilger F."/>
            <person name="Hofmann B."/>
            <person name="Hollenberg C.P."/>
            <person name="Hughes B."/>
            <person name="Jauniaux J.-C."/>
            <person name="Kalogeropoulos A."/>
            <person name="Katsoulou C."/>
            <person name="Kordes E."/>
            <person name="Lafuente M.J."/>
            <person name="Landt O."/>
            <person name="Louis E.J."/>
            <person name="Maarse A.C."/>
            <person name="Madania A."/>
            <person name="Mannhaupt G."/>
            <person name="Marck C."/>
            <person name="Martin R.P."/>
            <person name="Mewes H.-W."/>
            <person name="Michaux G."/>
            <person name="Paces V."/>
            <person name="Parle-McDermott A.G."/>
            <person name="Pearson B.M."/>
            <person name="Perrin A."/>
            <person name="Pettersson B."/>
            <person name="Poch O."/>
            <person name="Pohl T.M."/>
            <person name="Poirey R."/>
            <person name="Portetelle D."/>
            <person name="Pujol A."/>
            <person name="Purnelle B."/>
            <person name="Ramezani Rad M."/>
            <person name="Rechmann S."/>
            <person name="Schwager C."/>
            <person name="Schweizer M."/>
            <person name="Sor F."/>
            <person name="Sterky F."/>
            <person name="Tarassov I.A."/>
            <person name="Teodoru C."/>
            <person name="Tettelin H."/>
            <person name="Thierry A."/>
            <person name="Tobiasch E."/>
            <person name="Tzermia M."/>
            <person name="Uhlen M."/>
            <person name="Unseld M."/>
            <person name="Valens M."/>
            <person name="Vandenbol M."/>
            <person name="Vetter I."/>
            <person name="Vlcek C."/>
            <person name="Voet M."/>
            <person name="Volckaert G."/>
            <person name="Voss H."/>
            <person name="Wambutt R."/>
            <person name="Wedler H."/>
            <person name="Wiemann S."/>
            <person name="Winsor B."/>
            <person name="Wolfe K.H."/>
            <person name="Zollner A."/>
            <person name="Zumstein E."/>
            <person name="Kleine K."/>
        </authorList>
    </citation>
    <scope>NUCLEOTIDE SEQUENCE [LARGE SCALE GENOMIC DNA]</scope>
    <source>
        <strain>ATCC 204508 / S288c</strain>
    </source>
</reference>
<reference key="4">
    <citation type="journal article" date="2014" name="G3 (Bethesda)">
        <title>The reference genome sequence of Saccharomyces cerevisiae: Then and now.</title>
        <authorList>
            <person name="Engel S.R."/>
            <person name="Dietrich F.S."/>
            <person name="Fisk D.G."/>
            <person name="Binkley G."/>
            <person name="Balakrishnan R."/>
            <person name="Costanzo M.C."/>
            <person name="Dwight S.S."/>
            <person name="Hitz B.C."/>
            <person name="Karra K."/>
            <person name="Nash R.S."/>
            <person name="Weng S."/>
            <person name="Wong E.D."/>
            <person name="Lloyd P."/>
            <person name="Skrzypek M.S."/>
            <person name="Miyasato S.R."/>
            <person name="Simison M."/>
            <person name="Cherry J.M."/>
        </authorList>
    </citation>
    <scope>GENOME REANNOTATION</scope>
    <scope>SEQUENCE REVISION TO 137</scope>
    <source>
        <strain>ATCC 204508 / S288c</strain>
    </source>
</reference>
<reference key="5">
    <citation type="journal article" date="2000" name="Mol. Biol. Cell">
        <title>Tim18p is a new component of the Tim54p-Tim22p translocon in the mitochondrial inner membrane.</title>
        <authorList>
            <person name="Kerscher O."/>
            <person name="Sepuri N.B."/>
            <person name="Jensen R.E."/>
        </authorList>
    </citation>
    <scope>FUNCTION</scope>
    <scope>SUBCELLULAR LOCATION</scope>
    <scope>TOPOLOGY</scope>
    <scope>IDENTIFICATION IN THE TIM22 COMPLEX WITH TIM22 AND TIM54</scope>
</reference>
<reference key="6">
    <citation type="journal article" date="2003" name="Genetics">
        <title>Suppression of a defect in mitochondrial protein import identifies cytosolic proteins required for viability of yeast cells lacking mitochondrial DNA.</title>
        <authorList>
            <person name="Dunn C.D."/>
            <person name="Jensen R.E."/>
        </authorList>
    </citation>
    <scope>FUNCTION</scope>
    <scope>DISRUPTION PHENOTYPE</scope>
</reference>
<reference key="7">
    <citation type="journal article" date="2003" name="Nature">
        <title>Global analysis of protein localization in budding yeast.</title>
        <authorList>
            <person name="Huh W.-K."/>
            <person name="Falvo J.V."/>
            <person name="Gerke L.C."/>
            <person name="Carroll A.S."/>
            <person name="Howson R.W."/>
            <person name="Weissman J.S."/>
            <person name="O'Shea E.K."/>
        </authorList>
    </citation>
    <scope>SUBCELLULAR LOCATION [LARGE SCALE ANALYSIS]</scope>
</reference>
<reference key="8">
    <citation type="journal article" date="2003" name="Nature">
        <title>Global analysis of protein expression in yeast.</title>
        <authorList>
            <person name="Ghaemmaghami S."/>
            <person name="Huh W.-K."/>
            <person name="Bower K."/>
            <person name="Howson R.W."/>
            <person name="Belle A."/>
            <person name="Dephoure N."/>
            <person name="O'Shea E.K."/>
            <person name="Weissman J.S."/>
        </authorList>
    </citation>
    <scope>LEVEL OF PROTEIN EXPRESSION [LARGE SCALE ANALYSIS]</scope>
</reference>
<reference key="9">
    <citation type="journal article" date="2003" name="Science">
        <title>Protein insertion into the mitochondrial inner membrane by a twin-pore translocase.</title>
        <authorList>
            <person name="Rehling P."/>
            <person name="Model K."/>
            <person name="Brandner K."/>
            <person name="Kovermann P."/>
            <person name="Sickmann A."/>
            <person name="Meyer H.E."/>
            <person name="Kuehlbrandt W."/>
            <person name="Wagner R."/>
            <person name="Truscott K.N."/>
            <person name="Pfanner N."/>
        </authorList>
    </citation>
    <scope>IDENTIFICATION IN THE TIM22 COMPLEX WITH TIM10; TIM12; TIM22 AND TIM54</scope>
</reference>
<reference key="10">
    <citation type="journal article" date="2003" name="Science">
        <authorList>
            <person name="Rehling P."/>
            <person name="Model K."/>
            <person name="Brandner K."/>
            <person name="Kovermann P."/>
            <person name="Sickmann A."/>
            <person name="Meyer H.E."/>
            <person name="Kuehlbrandt W."/>
            <person name="Wagner R."/>
            <person name="Truscott K.N."/>
            <person name="Pfanner N."/>
        </authorList>
    </citation>
    <scope>ERRATUM OF PUBMED:12637749</scope>
</reference>
<sequence>MLLFPGLKPVLNASTVIVNPVRAVFPGLVLSTKRSFYSINRLNAENKINDIANTSKEASSSVQMFKPPEFSQFKDSYQKDYERIAKYTLIPLTMVPFYASFTGGVINPLLDASLSSIFLIYLQYGFTSCIIDYIPKEKYPRWHKLALYCLYGGSMLSLYGIYELETKNNGFVDLVKKLWNENDDHLYIFGRN</sequence>
<organism>
    <name type="scientific">Saccharomyces cerevisiae (strain ATCC 204508 / S288c)</name>
    <name type="common">Baker's yeast</name>
    <dbReference type="NCBI Taxonomy" id="559292"/>
    <lineage>
        <taxon>Eukaryota</taxon>
        <taxon>Fungi</taxon>
        <taxon>Dikarya</taxon>
        <taxon>Ascomycota</taxon>
        <taxon>Saccharomycotina</taxon>
        <taxon>Saccharomycetes</taxon>
        <taxon>Saccharomycetales</taxon>
        <taxon>Saccharomycetaceae</taxon>
        <taxon>Saccharomyces</taxon>
    </lineage>
</organism>
<protein>
    <recommendedName>
        <fullName>Mitochondrial import inner membrane translocase subunit TIM18</fullName>
    </recommendedName>
</protein>
<proteinExistence type="evidence at protein level"/>